<feature type="chain" id="PRO_0000315356" description="Sorting nexin-27">
    <location>
        <begin position="1"/>
        <end position="541"/>
    </location>
</feature>
<feature type="domain" description="PDZ" evidence="2">
    <location>
        <begin position="43"/>
        <end position="136"/>
    </location>
</feature>
<feature type="domain" description="PX" evidence="3">
    <location>
        <begin position="161"/>
        <end position="269"/>
    </location>
</feature>
<feature type="domain" description="Ras-associating" evidence="4">
    <location>
        <begin position="273"/>
        <end position="362"/>
    </location>
</feature>
<feature type="region of interest" description="Disordered" evidence="5">
    <location>
        <begin position="1"/>
        <end position="42"/>
    </location>
</feature>
<feature type="region of interest" description="FERM-like region F1">
    <location>
        <begin position="273"/>
        <end position="362"/>
    </location>
</feature>
<feature type="region of interest" description="FERM-like region F2">
    <location>
        <begin position="373"/>
        <end position="421"/>
    </location>
</feature>
<feature type="region of interest" description="FERM-like region F3">
    <location>
        <begin position="425"/>
        <end position="525"/>
    </location>
</feature>
<feature type="compositionally biased region" description="Gly residues" evidence="5">
    <location>
        <begin position="17"/>
        <end position="41"/>
    </location>
</feature>
<feature type="modified residue" description="Phosphoserine" evidence="23">
    <location>
        <position position="51"/>
    </location>
</feature>
<feature type="modified residue" description="Phosphoserine" evidence="22">
    <location>
        <position position="62"/>
    </location>
</feature>
<feature type="splice variant" id="VSP_030537" description="In isoform 3." evidence="17">
    <location>
        <begin position="1"/>
        <end position="93"/>
    </location>
</feature>
<feature type="splice variant" id="VSP_030538" description="In isoform 3." evidence="17">
    <original>GVRKGDRILEV</original>
    <variation>MGLSFSLFPLR</variation>
    <location>
        <begin position="94"/>
        <end position="104"/>
    </location>
</feature>
<feature type="splice variant" id="VSP_030539" description="In isoform 2 and isoform 3." evidence="17 18 19 20">
    <original>NIFQMARSQQRDVAT</original>
    <variation>EY</variation>
    <location>
        <begin position="527"/>
        <end position="541"/>
    </location>
</feature>
<feature type="sequence variant" id="VAR_059851" description="In dbSNP:rs11204871.">
    <original>E</original>
    <variation>K</variation>
    <location>
        <position position="459"/>
    </location>
</feature>
<feature type="mutagenesis site" description="Abolishes interaction with ADRB2, sorting and recycling of ADRB2." evidence="9">
    <original>H</original>
    <variation>A</variation>
    <location>
        <position position="114"/>
    </location>
</feature>
<feature type="sequence conflict" description="In Ref. 3; AAI07863." evidence="21" ref="3">
    <original>I</original>
    <variation>V</variation>
    <location>
        <position position="467"/>
    </location>
</feature>
<feature type="strand" evidence="26">
    <location>
        <begin position="42"/>
        <end position="47"/>
    </location>
</feature>
<feature type="strand" evidence="26">
    <location>
        <begin position="55"/>
        <end position="63"/>
    </location>
</feature>
<feature type="strand" evidence="27">
    <location>
        <begin position="64"/>
        <end position="66"/>
    </location>
</feature>
<feature type="strand" evidence="26">
    <location>
        <begin position="68"/>
        <end position="70"/>
    </location>
</feature>
<feature type="strand" evidence="26">
    <location>
        <begin position="73"/>
        <end position="75"/>
    </location>
</feature>
<feature type="strand" evidence="26">
    <location>
        <begin position="80"/>
        <end position="84"/>
    </location>
</feature>
<feature type="helix" evidence="26">
    <location>
        <begin position="89"/>
        <end position="93"/>
    </location>
</feature>
<feature type="strand" evidence="26">
    <location>
        <begin position="100"/>
        <end position="104"/>
    </location>
</feature>
<feature type="helix" evidence="26">
    <location>
        <begin position="114"/>
        <end position="122"/>
    </location>
</feature>
<feature type="strand" evidence="26">
    <location>
        <begin position="125"/>
        <end position="133"/>
    </location>
</feature>
<feature type="helix" evidence="27">
    <location>
        <begin position="137"/>
        <end position="139"/>
    </location>
</feature>
<feature type="strand" evidence="24">
    <location>
        <begin position="165"/>
        <end position="175"/>
    </location>
</feature>
<feature type="strand" evidence="24">
    <location>
        <begin position="178"/>
        <end position="187"/>
    </location>
</feature>
<feature type="strand" evidence="24">
    <location>
        <begin position="190"/>
        <end position="195"/>
    </location>
</feature>
<feature type="helix" evidence="24">
    <location>
        <begin position="197"/>
        <end position="210"/>
    </location>
</feature>
<feature type="turn" evidence="24">
    <location>
        <begin position="211"/>
        <end position="213"/>
    </location>
</feature>
<feature type="helix" evidence="24">
    <location>
        <begin position="229"/>
        <end position="246"/>
    </location>
</feature>
<feature type="helix" evidence="24">
    <location>
        <begin position="250"/>
        <end position="253"/>
    </location>
</feature>
<feature type="helix" evidence="24">
    <location>
        <begin position="256"/>
        <end position="261"/>
    </location>
</feature>
<feature type="strand" evidence="25">
    <location>
        <begin position="275"/>
        <end position="280"/>
    </location>
</feature>
<feature type="strand" evidence="25">
    <location>
        <begin position="286"/>
        <end position="291"/>
    </location>
</feature>
<feature type="helix" evidence="25">
    <location>
        <begin position="297"/>
        <end position="308"/>
    </location>
</feature>
<feature type="turn" evidence="25">
    <location>
        <begin position="312"/>
        <end position="314"/>
    </location>
</feature>
<feature type="helix" evidence="25">
    <location>
        <begin position="315"/>
        <end position="317"/>
    </location>
</feature>
<feature type="strand" evidence="25">
    <location>
        <begin position="318"/>
        <end position="325"/>
    </location>
</feature>
<feature type="strand" evidence="25">
    <location>
        <begin position="328"/>
        <end position="331"/>
    </location>
</feature>
<feature type="helix" evidence="25">
    <location>
        <begin position="338"/>
        <end position="344"/>
    </location>
</feature>
<feature type="helix" evidence="25">
    <location>
        <begin position="346"/>
        <end position="349"/>
    </location>
</feature>
<feature type="strand" evidence="25">
    <location>
        <begin position="354"/>
        <end position="359"/>
    </location>
</feature>
<feature type="helix" evidence="25">
    <location>
        <begin position="364"/>
        <end position="368"/>
    </location>
</feature>
<feature type="turn" evidence="25">
    <location>
        <begin position="369"/>
        <end position="372"/>
    </location>
</feature>
<feature type="helix" evidence="25">
    <location>
        <begin position="374"/>
        <end position="389"/>
    </location>
</feature>
<feature type="strand" evidence="25">
    <location>
        <begin position="392"/>
        <end position="394"/>
    </location>
</feature>
<feature type="helix" evidence="28">
    <location>
        <begin position="396"/>
        <end position="398"/>
    </location>
</feature>
<feature type="helix" evidence="25">
    <location>
        <begin position="399"/>
        <end position="407"/>
    </location>
</feature>
<feature type="helix" evidence="25">
    <location>
        <begin position="411"/>
        <end position="418"/>
    </location>
</feature>
<feature type="turn" evidence="25">
    <location>
        <begin position="423"/>
        <end position="425"/>
    </location>
</feature>
<feature type="strand" evidence="25">
    <location>
        <begin position="438"/>
        <end position="446"/>
    </location>
</feature>
<feature type="strand" evidence="25">
    <location>
        <begin position="451"/>
        <end position="456"/>
    </location>
</feature>
<feature type="strand" evidence="25">
    <location>
        <begin position="462"/>
        <end position="469"/>
    </location>
</feature>
<feature type="helix" evidence="25">
    <location>
        <begin position="471"/>
        <end position="473"/>
    </location>
</feature>
<feature type="strand" evidence="25">
    <location>
        <begin position="474"/>
        <end position="480"/>
    </location>
</feature>
<feature type="turn" evidence="25">
    <location>
        <begin position="481"/>
        <end position="484"/>
    </location>
</feature>
<feature type="strand" evidence="25">
    <location>
        <begin position="485"/>
        <end position="490"/>
    </location>
</feature>
<feature type="strand" evidence="25">
    <location>
        <begin position="498"/>
        <end position="502"/>
    </location>
</feature>
<feature type="helix" evidence="25">
    <location>
        <begin position="507"/>
        <end position="526"/>
    </location>
</feature>
<name>SNX27_HUMAN</name>
<proteinExistence type="evidence at protein level"/>
<dbReference type="EMBL" id="AY044866">
    <property type="protein sequence ID" value="AAK97797.1"/>
    <property type="molecule type" value="mRNA"/>
</dbReference>
<dbReference type="EMBL" id="AL391335">
    <property type="status" value="NOT_ANNOTATED_CDS"/>
    <property type="molecule type" value="Genomic_DNA"/>
</dbReference>
<dbReference type="EMBL" id="AL589765">
    <property type="status" value="NOT_ANNOTATED_CDS"/>
    <property type="molecule type" value="Genomic_DNA"/>
</dbReference>
<dbReference type="EMBL" id="BC012184">
    <property type="protein sequence ID" value="AAH12184.1"/>
    <property type="status" value="ALT_INIT"/>
    <property type="molecule type" value="mRNA"/>
</dbReference>
<dbReference type="EMBL" id="BC051817">
    <property type="protein sequence ID" value="AAH51817.1"/>
    <property type="molecule type" value="mRNA"/>
</dbReference>
<dbReference type="EMBL" id="BC071825">
    <property type="protein sequence ID" value="AAH71825.1"/>
    <property type="molecule type" value="mRNA"/>
</dbReference>
<dbReference type="EMBL" id="BC100998">
    <property type="protein sequence ID" value="AAI00999.1"/>
    <property type="molecule type" value="mRNA"/>
</dbReference>
<dbReference type="EMBL" id="BC100999">
    <property type="protein sequence ID" value="AAI01000.1"/>
    <property type="molecule type" value="mRNA"/>
</dbReference>
<dbReference type="EMBL" id="BC101000">
    <property type="protein sequence ID" value="AAI01001.1"/>
    <property type="molecule type" value="mRNA"/>
</dbReference>
<dbReference type="EMBL" id="BC101822">
    <property type="protein sequence ID" value="AAI01823.1"/>
    <property type="molecule type" value="mRNA"/>
</dbReference>
<dbReference type="EMBL" id="BC101824">
    <property type="protein sequence ID" value="AAI01825.1"/>
    <property type="molecule type" value="mRNA"/>
</dbReference>
<dbReference type="EMBL" id="BC107862">
    <property type="protein sequence ID" value="AAI07863.1"/>
    <property type="molecule type" value="mRNA"/>
</dbReference>
<dbReference type="EMBL" id="AB007957">
    <property type="protein sequence ID" value="BAE16986.1"/>
    <property type="molecule type" value="mRNA"/>
</dbReference>
<dbReference type="EMBL" id="AF060509">
    <property type="protein sequence ID" value="AAG43127.1"/>
    <property type="status" value="ALT_INIT"/>
    <property type="molecule type" value="mRNA"/>
</dbReference>
<dbReference type="CCDS" id="CCDS1001.1">
    <molecule id="Q96L92-3"/>
</dbReference>
<dbReference type="CCDS" id="CCDS81377.1">
    <molecule id="Q96L92-1"/>
</dbReference>
<dbReference type="RefSeq" id="NP_001317652.1">
    <molecule id="Q96L92-1"/>
    <property type="nucleotide sequence ID" value="NM_001330723.2"/>
</dbReference>
<dbReference type="RefSeq" id="NP_112180.4">
    <molecule id="Q96L92-3"/>
    <property type="nucleotide sequence ID" value="NM_030918.5"/>
</dbReference>
<dbReference type="PDB" id="4HAS">
    <property type="method" value="X-ray"/>
    <property type="resolution" value="1.74 A"/>
    <property type="chains" value="A/B=156-265"/>
</dbReference>
<dbReference type="PDB" id="5ZN9">
    <property type="method" value="X-ray"/>
    <property type="resolution" value="1.78 A"/>
    <property type="chains" value="A/B=156-265"/>
</dbReference>
<dbReference type="PDB" id="6SAK">
    <property type="method" value="X-ray"/>
    <property type="resolution" value="2.00 A"/>
    <property type="chains" value="C/D=40-135"/>
</dbReference>
<dbReference type="PDB" id="7CT1">
    <property type="method" value="X-ray"/>
    <property type="resolution" value="1.95 A"/>
    <property type="chains" value="A=273-526"/>
</dbReference>
<dbReference type="PDB" id="7E0B">
    <property type="method" value="X-ray"/>
    <property type="resolution" value="1.29 A"/>
    <property type="chains" value="A=40-135"/>
</dbReference>
<dbReference type="PDB" id="7P72">
    <property type="method" value="X-ray"/>
    <property type="resolution" value="2.15 A"/>
    <property type="chains" value="A=39-141"/>
</dbReference>
<dbReference type="PDB" id="7PCB">
    <property type="method" value="X-ray"/>
    <property type="resolution" value="2.00 A"/>
    <property type="chains" value="A=39-141"/>
</dbReference>
<dbReference type="PDB" id="8TTT">
    <property type="method" value="X-ray"/>
    <property type="resolution" value="2.35 A"/>
    <property type="chains" value="A=271-526"/>
</dbReference>
<dbReference type="PDB" id="8TTU">
    <property type="method" value="X-ray"/>
    <property type="resolution" value="2.36 A"/>
    <property type="chains" value="A=271-526"/>
</dbReference>
<dbReference type="PDB" id="8TTV">
    <property type="method" value="X-ray"/>
    <property type="resolution" value="2.00 A"/>
    <property type="chains" value="A=271-526"/>
</dbReference>
<dbReference type="PDBsum" id="4HAS"/>
<dbReference type="PDBsum" id="5ZN9"/>
<dbReference type="PDBsum" id="6SAK"/>
<dbReference type="PDBsum" id="7CT1"/>
<dbReference type="PDBsum" id="7E0B"/>
<dbReference type="PDBsum" id="7P72"/>
<dbReference type="PDBsum" id="7PCB"/>
<dbReference type="PDBsum" id="8TTT"/>
<dbReference type="PDBsum" id="8TTU"/>
<dbReference type="PDBsum" id="8TTV"/>
<dbReference type="SMR" id="Q96L92"/>
<dbReference type="BioGRID" id="123546">
    <property type="interactions" value="522"/>
</dbReference>
<dbReference type="FunCoup" id="Q96L92">
    <property type="interactions" value="3693"/>
</dbReference>
<dbReference type="IntAct" id="Q96L92">
    <property type="interactions" value="119"/>
</dbReference>
<dbReference type="MINT" id="Q96L92"/>
<dbReference type="STRING" id="9606.ENSP00000400333"/>
<dbReference type="TCDB" id="3.A.34.1.1">
    <property type="family name" value="the sorting nexins of the escrt complexes (sn-escrt)"/>
</dbReference>
<dbReference type="TCDB" id="9.A.3.1.1">
    <property type="family name" value="the sorting nexin27 (snx27)-retromer assembly apparatus (retromeraa) family"/>
</dbReference>
<dbReference type="GlyGen" id="Q96L92">
    <property type="glycosylation" value="1 site, 1 O-linked glycan (1 site)"/>
</dbReference>
<dbReference type="iPTMnet" id="Q96L92"/>
<dbReference type="PhosphoSitePlus" id="Q96L92"/>
<dbReference type="BioMuta" id="SNX27"/>
<dbReference type="DMDM" id="166214988"/>
<dbReference type="jPOST" id="Q96L92"/>
<dbReference type="MassIVE" id="Q96L92"/>
<dbReference type="PaxDb" id="9606-ENSP00000357836"/>
<dbReference type="PeptideAtlas" id="Q96L92"/>
<dbReference type="ProteomicsDB" id="77161">
    <molecule id="Q96L92-1"/>
</dbReference>
<dbReference type="ProteomicsDB" id="77162">
    <molecule id="Q96L92-2"/>
</dbReference>
<dbReference type="ProteomicsDB" id="77163">
    <molecule id="Q96L92-3"/>
</dbReference>
<dbReference type="Pumba" id="Q96L92"/>
<dbReference type="Antibodypedia" id="46991">
    <property type="antibodies" value="282 antibodies from 25 providers"/>
</dbReference>
<dbReference type="DNASU" id="81609"/>
<dbReference type="Ensembl" id="ENST00000368843.8">
    <molecule id="Q96L92-3"/>
    <property type="protein sequence ID" value="ENSP00000357836.3"/>
    <property type="gene ID" value="ENSG00000143376.14"/>
</dbReference>
<dbReference type="Ensembl" id="ENST00000458013.7">
    <molecule id="Q96L92-1"/>
    <property type="protein sequence ID" value="ENSP00000400333.2"/>
    <property type="gene ID" value="ENSG00000143376.14"/>
</dbReference>
<dbReference type="GeneID" id="81609"/>
<dbReference type="KEGG" id="hsa:81609"/>
<dbReference type="MANE-Select" id="ENST00000458013.7">
    <property type="protein sequence ID" value="ENSP00000400333.2"/>
    <property type="RefSeq nucleotide sequence ID" value="NM_001330723.2"/>
    <property type="RefSeq protein sequence ID" value="NP_001317652.1"/>
</dbReference>
<dbReference type="UCSC" id="uc001eyn.2">
    <molecule id="Q96L92-1"/>
    <property type="organism name" value="human"/>
</dbReference>
<dbReference type="AGR" id="HGNC:20073"/>
<dbReference type="CTD" id="81609"/>
<dbReference type="DisGeNET" id="81609"/>
<dbReference type="GeneCards" id="SNX27"/>
<dbReference type="HGNC" id="HGNC:20073">
    <property type="gene designation" value="SNX27"/>
</dbReference>
<dbReference type="HPA" id="ENSG00000143376">
    <property type="expression patterns" value="Low tissue specificity"/>
</dbReference>
<dbReference type="MalaCards" id="SNX27"/>
<dbReference type="MIM" id="611541">
    <property type="type" value="gene"/>
</dbReference>
<dbReference type="neXtProt" id="NX_Q96L92"/>
<dbReference type="OpenTargets" id="ENSG00000143376"/>
<dbReference type="PharmGKB" id="PA134969143"/>
<dbReference type="VEuPathDB" id="HostDB:ENSG00000143376"/>
<dbReference type="eggNOG" id="KOG3784">
    <property type="taxonomic scope" value="Eukaryota"/>
</dbReference>
<dbReference type="GeneTree" id="ENSGT00950000183212"/>
<dbReference type="HOGENOM" id="CLU_028138_0_0_1"/>
<dbReference type="InParanoid" id="Q96L92"/>
<dbReference type="OMA" id="PNEFPHN"/>
<dbReference type="OrthoDB" id="10036828at2759"/>
<dbReference type="PAN-GO" id="Q96L92">
    <property type="GO annotations" value="3 GO annotations based on evolutionary models"/>
</dbReference>
<dbReference type="PhylomeDB" id="Q96L92"/>
<dbReference type="TreeFam" id="TF318398"/>
<dbReference type="PathwayCommons" id="Q96L92"/>
<dbReference type="SignaLink" id="Q96L92"/>
<dbReference type="BioGRID-ORCS" id="81609">
    <property type="hits" value="25 hits in 1164 CRISPR screens"/>
</dbReference>
<dbReference type="CD-CODE" id="FB4E32DD">
    <property type="entry name" value="Presynaptic clusters and postsynaptic densities"/>
</dbReference>
<dbReference type="ChiTaRS" id="SNX27">
    <property type="organism name" value="human"/>
</dbReference>
<dbReference type="EvolutionaryTrace" id="Q96L92"/>
<dbReference type="GeneWiki" id="SNX27"/>
<dbReference type="GenomeRNAi" id="81609"/>
<dbReference type="Pharos" id="Q96L92">
    <property type="development level" value="Tbio"/>
</dbReference>
<dbReference type="PRO" id="PR:Q96L92"/>
<dbReference type="Proteomes" id="UP000005640">
    <property type="component" value="Chromosome 1"/>
</dbReference>
<dbReference type="RNAct" id="Q96L92">
    <property type="molecule type" value="protein"/>
</dbReference>
<dbReference type="Bgee" id="ENSG00000143376">
    <property type="expression patterns" value="Expressed in medial globus pallidus and 215 other cell types or tissues"/>
</dbReference>
<dbReference type="ExpressionAtlas" id="Q96L92">
    <property type="expression patterns" value="baseline and differential"/>
</dbReference>
<dbReference type="GO" id="GO:0005829">
    <property type="term" value="C:cytosol"/>
    <property type="evidence" value="ECO:0007669"/>
    <property type="project" value="UniProtKB-SubCell"/>
</dbReference>
<dbReference type="GO" id="GO:0005769">
    <property type="term" value="C:early endosome"/>
    <property type="evidence" value="ECO:0000314"/>
    <property type="project" value="UniProtKB"/>
</dbReference>
<dbReference type="GO" id="GO:0031901">
    <property type="term" value="C:early endosome membrane"/>
    <property type="evidence" value="ECO:0007669"/>
    <property type="project" value="UniProtKB-SubCell"/>
</dbReference>
<dbReference type="GO" id="GO:0005768">
    <property type="term" value="C:endosome"/>
    <property type="evidence" value="ECO:0000305"/>
    <property type="project" value="ParkinsonsUK-UCL"/>
</dbReference>
<dbReference type="GO" id="GO:0098978">
    <property type="term" value="C:glutamatergic synapse"/>
    <property type="evidence" value="ECO:0000314"/>
    <property type="project" value="SynGO"/>
</dbReference>
<dbReference type="GO" id="GO:0001772">
    <property type="term" value="C:immunological synapse"/>
    <property type="evidence" value="ECO:0000314"/>
    <property type="project" value="UniProtKB"/>
</dbReference>
<dbReference type="GO" id="GO:0043231">
    <property type="term" value="C:intracellular membrane-bounded organelle"/>
    <property type="evidence" value="ECO:0000314"/>
    <property type="project" value="HPA"/>
</dbReference>
<dbReference type="GO" id="GO:0098842">
    <property type="term" value="C:postsynaptic early endosome"/>
    <property type="evidence" value="ECO:0007669"/>
    <property type="project" value="Ensembl"/>
</dbReference>
<dbReference type="GO" id="GO:0098837">
    <property type="term" value="C:postsynaptic recycling endosome"/>
    <property type="evidence" value="ECO:0007669"/>
    <property type="project" value="Ensembl"/>
</dbReference>
<dbReference type="GO" id="GO:0098685">
    <property type="term" value="C:Schaffer collateral - CA1 synapse"/>
    <property type="evidence" value="ECO:0007669"/>
    <property type="project" value="Ensembl"/>
</dbReference>
<dbReference type="GO" id="GO:0035091">
    <property type="term" value="F:phosphatidylinositol binding"/>
    <property type="evidence" value="ECO:0000318"/>
    <property type="project" value="GO_Central"/>
</dbReference>
<dbReference type="GO" id="GO:0032266">
    <property type="term" value="F:phosphatidylinositol-3-phosphate binding"/>
    <property type="evidence" value="ECO:0000314"/>
    <property type="project" value="UniProtKB"/>
</dbReference>
<dbReference type="GO" id="GO:0032456">
    <property type="term" value="P:endocytic recycling"/>
    <property type="evidence" value="ECO:0000315"/>
    <property type="project" value="UniProtKB"/>
</dbReference>
<dbReference type="GO" id="GO:0016197">
    <property type="term" value="P:endosomal transport"/>
    <property type="evidence" value="ECO:0000315"/>
    <property type="project" value="UniProtKB"/>
</dbReference>
<dbReference type="GO" id="GO:0008333">
    <property type="term" value="P:endosome to lysosome transport"/>
    <property type="evidence" value="ECO:0000315"/>
    <property type="project" value="MGI"/>
</dbReference>
<dbReference type="GO" id="GO:0001770">
    <property type="term" value="P:establishment of natural killer cell polarity"/>
    <property type="evidence" value="ECO:0000304"/>
    <property type="project" value="UniProtKB"/>
</dbReference>
<dbReference type="GO" id="GO:0006886">
    <property type="term" value="P:intracellular protein transport"/>
    <property type="evidence" value="ECO:0000315"/>
    <property type="project" value="UniProtKB"/>
</dbReference>
<dbReference type="GO" id="GO:0099072">
    <property type="term" value="P:regulation of postsynaptic membrane neurotransmitter receptor levels"/>
    <property type="evidence" value="ECO:0007669"/>
    <property type="project" value="Ensembl"/>
</dbReference>
<dbReference type="GO" id="GO:0090128">
    <property type="term" value="P:regulation of synapse maturation"/>
    <property type="evidence" value="ECO:0000314"/>
    <property type="project" value="SynGO"/>
</dbReference>
<dbReference type="GO" id="GO:0007165">
    <property type="term" value="P:signal transduction"/>
    <property type="evidence" value="ECO:0007669"/>
    <property type="project" value="InterPro"/>
</dbReference>
<dbReference type="CDD" id="cd13338">
    <property type="entry name" value="FERM-like_C_SNX27"/>
    <property type="match status" value="1"/>
</dbReference>
<dbReference type="CDD" id="cd01777">
    <property type="entry name" value="FERM_F1_SNX27"/>
    <property type="match status" value="1"/>
</dbReference>
<dbReference type="CDD" id="cd23070">
    <property type="entry name" value="PDZ_SNX27-like"/>
    <property type="match status" value="1"/>
</dbReference>
<dbReference type="CDD" id="cd06886">
    <property type="entry name" value="PX_SNX27"/>
    <property type="match status" value="1"/>
</dbReference>
<dbReference type="FunFam" id="1.20.80.60:FF:000002">
    <property type="entry name" value="sorting nexin-27 isoform X2"/>
    <property type="match status" value="1"/>
</dbReference>
<dbReference type="FunFam" id="2.30.42.10:FF:000061">
    <property type="entry name" value="sorting nexin-27 isoform X2"/>
    <property type="match status" value="1"/>
</dbReference>
<dbReference type="FunFam" id="3.10.20.90:FF:000075">
    <property type="entry name" value="sorting nexin-27 isoform X2"/>
    <property type="match status" value="1"/>
</dbReference>
<dbReference type="FunFam" id="3.30.1520.10:FF:000003">
    <property type="entry name" value="sorting nexin-27 isoform X2"/>
    <property type="match status" value="1"/>
</dbReference>
<dbReference type="Gene3D" id="1.20.80.60">
    <property type="match status" value="1"/>
</dbReference>
<dbReference type="Gene3D" id="2.30.42.10">
    <property type="match status" value="1"/>
</dbReference>
<dbReference type="Gene3D" id="3.10.20.90">
    <property type="entry name" value="Phosphatidylinositol 3-kinase Catalytic Subunit, Chain A, domain 1"/>
    <property type="match status" value="1"/>
</dbReference>
<dbReference type="Gene3D" id="3.30.1520.10">
    <property type="entry name" value="Phox-like domain"/>
    <property type="match status" value="1"/>
</dbReference>
<dbReference type="InterPro" id="IPR001478">
    <property type="entry name" value="PDZ"/>
</dbReference>
<dbReference type="InterPro" id="IPR036034">
    <property type="entry name" value="PDZ_sf"/>
</dbReference>
<dbReference type="InterPro" id="IPR001683">
    <property type="entry name" value="PX_dom"/>
</dbReference>
<dbReference type="InterPro" id="IPR036871">
    <property type="entry name" value="PX_dom_sf"/>
</dbReference>
<dbReference type="InterPro" id="IPR000159">
    <property type="entry name" value="RA_dom"/>
</dbReference>
<dbReference type="InterPro" id="IPR037827">
    <property type="entry name" value="SNX27_FERM-like_dom"/>
</dbReference>
<dbReference type="InterPro" id="IPR037833">
    <property type="entry name" value="SNX27_PX"/>
</dbReference>
<dbReference type="InterPro" id="IPR037835">
    <property type="entry name" value="SNX27_RA"/>
</dbReference>
<dbReference type="InterPro" id="IPR029071">
    <property type="entry name" value="Ubiquitin-like_domsf"/>
</dbReference>
<dbReference type="PANTHER" id="PTHR12431">
    <property type="entry name" value="SORTING NEXIN 17 AND 27"/>
    <property type="match status" value="1"/>
</dbReference>
<dbReference type="PANTHER" id="PTHR12431:SF19">
    <property type="entry name" value="SORTING NEXIN-27"/>
    <property type="match status" value="1"/>
</dbReference>
<dbReference type="Pfam" id="PF00595">
    <property type="entry name" value="PDZ"/>
    <property type="match status" value="1"/>
</dbReference>
<dbReference type="Pfam" id="PF00787">
    <property type="entry name" value="PX"/>
    <property type="match status" value="1"/>
</dbReference>
<dbReference type="Pfam" id="PF00788">
    <property type="entry name" value="RA"/>
    <property type="match status" value="1"/>
</dbReference>
<dbReference type="SMART" id="SM00228">
    <property type="entry name" value="PDZ"/>
    <property type="match status" value="1"/>
</dbReference>
<dbReference type="SMART" id="SM00312">
    <property type="entry name" value="PX"/>
    <property type="match status" value="1"/>
</dbReference>
<dbReference type="SUPFAM" id="SSF50156">
    <property type="entry name" value="PDZ domain-like"/>
    <property type="match status" value="1"/>
</dbReference>
<dbReference type="SUPFAM" id="SSF64268">
    <property type="entry name" value="PX domain"/>
    <property type="match status" value="1"/>
</dbReference>
<dbReference type="SUPFAM" id="SSF54236">
    <property type="entry name" value="Ubiquitin-like"/>
    <property type="match status" value="1"/>
</dbReference>
<dbReference type="PROSITE" id="PS50106">
    <property type="entry name" value="PDZ"/>
    <property type="match status" value="1"/>
</dbReference>
<dbReference type="PROSITE" id="PS50195">
    <property type="entry name" value="PX"/>
    <property type="match status" value="1"/>
</dbReference>
<dbReference type="PROSITE" id="PS50200">
    <property type="entry name" value="RA"/>
    <property type="match status" value="1"/>
</dbReference>
<protein>
    <recommendedName>
        <fullName>Sorting nexin-27</fullName>
    </recommendedName>
</protein>
<reference key="1">
    <citation type="journal article" date="2004" name="J. Cell Sci.">
        <title>New sorting nexin (SNX27) and NHERF specifically interact with the 5-HT4a receptor splice variant: roles in receptor targeting.</title>
        <authorList>
            <person name="Joubert L."/>
            <person name="Hanson B."/>
            <person name="Barthet G."/>
            <person name="Sebben M."/>
            <person name="Claeysen S."/>
            <person name="Hong W."/>
            <person name="Marin P."/>
            <person name="Dumuis A."/>
            <person name="Bockaert J."/>
        </authorList>
    </citation>
    <scope>NUCLEOTIDE SEQUENCE [MRNA] (ISOFORM 3)</scope>
</reference>
<reference key="2">
    <citation type="journal article" date="2006" name="Nature">
        <title>The DNA sequence and biological annotation of human chromosome 1.</title>
        <authorList>
            <person name="Gregory S.G."/>
            <person name="Barlow K.F."/>
            <person name="McLay K.E."/>
            <person name="Kaul R."/>
            <person name="Swarbreck D."/>
            <person name="Dunham A."/>
            <person name="Scott C.E."/>
            <person name="Howe K.L."/>
            <person name="Woodfine K."/>
            <person name="Spencer C.C.A."/>
            <person name="Jones M.C."/>
            <person name="Gillson C."/>
            <person name="Searle S."/>
            <person name="Zhou Y."/>
            <person name="Kokocinski F."/>
            <person name="McDonald L."/>
            <person name="Evans R."/>
            <person name="Phillips K."/>
            <person name="Atkinson A."/>
            <person name="Cooper R."/>
            <person name="Jones C."/>
            <person name="Hall R.E."/>
            <person name="Andrews T.D."/>
            <person name="Lloyd C."/>
            <person name="Ainscough R."/>
            <person name="Almeida J.P."/>
            <person name="Ambrose K.D."/>
            <person name="Anderson F."/>
            <person name="Andrew R.W."/>
            <person name="Ashwell R.I.S."/>
            <person name="Aubin K."/>
            <person name="Babbage A.K."/>
            <person name="Bagguley C.L."/>
            <person name="Bailey J."/>
            <person name="Beasley H."/>
            <person name="Bethel G."/>
            <person name="Bird C.P."/>
            <person name="Bray-Allen S."/>
            <person name="Brown J.Y."/>
            <person name="Brown A.J."/>
            <person name="Buckley D."/>
            <person name="Burton J."/>
            <person name="Bye J."/>
            <person name="Carder C."/>
            <person name="Chapman J.C."/>
            <person name="Clark S.Y."/>
            <person name="Clarke G."/>
            <person name="Clee C."/>
            <person name="Cobley V."/>
            <person name="Collier R.E."/>
            <person name="Corby N."/>
            <person name="Coville G.J."/>
            <person name="Davies J."/>
            <person name="Deadman R."/>
            <person name="Dunn M."/>
            <person name="Earthrowl M."/>
            <person name="Ellington A.G."/>
            <person name="Errington H."/>
            <person name="Frankish A."/>
            <person name="Frankland J."/>
            <person name="French L."/>
            <person name="Garner P."/>
            <person name="Garnett J."/>
            <person name="Gay L."/>
            <person name="Ghori M.R.J."/>
            <person name="Gibson R."/>
            <person name="Gilby L.M."/>
            <person name="Gillett W."/>
            <person name="Glithero R.J."/>
            <person name="Grafham D.V."/>
            <person name="Griffiths C."/>
            <person name="Griffiths-Jones S."/>
            <person name="Grocock R."/>
            <person name="Hammond S."/>
            <person name="Harrison E.S.I."/>
            <person name="Hart E."/>
            <person name="Haugen E."/>
            <person name="Heath P.D."/>
            <person name="Holmes S."/>
            <person name="Holt K."/>
            <person name="Howden P.J."/>
            <person name="Hunt A.R."/>
            <person name="Hunt S.E."/>
            <person name="Hunter G."/>
            <person name="Isherwood J."/>
            <person name="James R."/>
            <person name="Johnson C."/>
            <person name="Johnson D."/>
            <person name="Joy A."/>
            <person name="Kay M."/>
            <person name="Kershaw J.K."/>
            <person name="Kibukawa M."/>
            <person name="Kimberley A.M."/>
            <person name="King A."/>
            <person name="Knights A.J."/>
            <person name="Lad H."/>
            <person name="Laird G."/>
            <person name="Lawlor S."/>
            <person name="Leongamornlert D.A."/>
            <person name="Lloyd D.M."/>
            <person name="Loveland J."/>
            <person name="Lovell J."/>
            <person name="Lush M.J."/>
            <person name="Lyne R."/>
            <person name="Martin S."/>
            <person name="Mashreghi-Mohammadi M."/>
            <person name="Matthews L."/>
            <person name="Matthews N.S.W."/>
            <person name="McLaren S."/>
            <person name="Milne S."/>
            <person name="Mistry S."/>
            <person name="Moore M.J.F."/>
            <person name="Nickerson T."/>
            <person name="O'Dell C.N."/>
            <person name="Oliver K."/>
            <person name="Palmeiri A."/>
            <person name="Palmer S.A."/>
            <person name="Parker A."/>
            <person name="Patel D."/>
            <person name="Pearce A.V."/>
            <person name="Peck A.I."/>
            <person name="Pelan S."/>
            <person name="Phelps K."/>
            <person name="Phillimore B.J."/>
            <person name="Plumb R."/>
            <person name="Rajan J."/>
            <person name="Raymond C."/>
            <person name="Rouse G."/>
            <person name="Saenphimmachak C."/>
            <person name="Sehra H.K."/>
            <person name="Sheridan E."/>
            <person name="Shownkeen R."/>
            <person name="Sims S."/>
            <person name="Skuce C.D."/>
            <person name="Smith M."/>
            <person name="Steward C."/>
            <person name="Subramanian S."/>
            <person name="Sycamore N."/>
            <person name="Tracey A."/>
            <person name="Tromans A."/>
            <person name="Van Helmond Z."/>
            <person name="Wall M."/>
            <person name="Wallis J.M."/>
            <person name="White S."/>
            <person name="Whitehead S.L."/>
            <person name="Wilkinson J.E."/>
            <person name="Willey D.L."/>
            <person name="Williams H."/>
            <person name="Wilming L."/>
            <person name="Wray P.W."/>
            <person name="Wu Z."/>
            <person name="Coulson A."/>
            <person name="Vaudin M."/>
            <person name="Sulston J.E."/>
            <person name="Durbin R.M."/>
            <person name="Hubbard T."/>
            <person name="Wooster R."/>
            <person name="Dunham I."/>
            <person name="Carter N.P."/>
            <person name="McVean G."/>
            <person name="Ross M.T."/>
            <person name="Harrow J."/>
            <person name="Olson M.V."/>
            <person name="Beck S."/>
            <person name="Rogers J."/>
            <person name="Bentley D.R."/>
        </authorList>
    </citation>
    <scope>NUCLEOTIDE SEQUENCE [LARGE SCALE GENOMIC DNA]</scope>
</reference>
<reference key="3">
    <citation type="journal article" date="2004" name="Genome Res.">
        <title>The status, quality, and expansion of the NIH full-length cDNA project: the Mammalian Gene Collection (MGC).</title>
        <authorList>
            <consortium name="The MGC Project Team"/>
        </authorList>
    </citation>
    <scope>NUCLEOTIDE SEQUENCE [LARGE SCALE MRNA] (ISOFORM 2)</scope>
    <scope>NUCLEOTIDE SEQUENCE [LARGE SCALE MRNA] OF 175-541 (ISOFORM 1)</scope>
    <source>
        <tissue>Eye</tissue>
        <tissue>Lung</tissue>
        <tissue>Placenta</tissue>
        <tissue>Uterus</tissue>
    </source>
</reference>
<reference key="4">
    <citation type="journal article" date="1997" name="DNA Res.">
        <title>Characterization of cDNA clones in size-fractionated cDNA libraries from human brain.</title>
        <authorList>
            <person name="Seki N."/>
            <person name="Ohira M."/>
            <person name="Nagase T."/>
            <person name="Ishikawa K."/>
            <person name="Miyajima N."/>
            <person name="Nakajima D."/>
            <person name="Nomura N."/>
            <person name="Ohara O."/>
        </authorList>
    </citation>
    <scope>NUCLEOTIDE SEQUENCE [LARGE SCALE MRNA] OF 6-528 (ISOFORM 2)</scope>
    <source>
        <tissue>Brain</tissue>
    </source>
</reference>
<reference key="5">
    <citation type="submission" date="1998-04" db="EMBL/GenBank/DDBJ databases">
        <authorList>
            <person name="Mao Y.M."/>
            <person name="Xie Y."/>
            <person name="Lin Q."/>
            <person name="Li Y."/>
            <person name="Dai J.L."/>
            <person name="Ying K."/>
        </authorList>
    </citation>
    <scope>NUCLEOTIDE SEQUENCE [LARGE SCALE MRNA] OF 352-528 (ISOFORM 2)</scope>
    <source>
        <tissue>Fetal brain</tissue>
    </source>
</reference>
<reference key="6">
    <citation type="journal article" date="2007" name="Biochem. Biophys. Res. Commun.">
        <title>Polarization of endosomal SNX27 in migrating and tumor-engaged natural killer cells.</title>
        <authorList>
            <person name="MacNeil A.J."/>
            <person name="Pohajdak B."/>
        </authorList>
    </citation>
    <scope>SUBCELLULAR LOCATION</scope>
</reference>
<reference key="7">
    <citation type="journal article" date="2007" name="Biochem. Biophys. Res. Commun.">
        <title>Sorting nexin 27 interacts with the Cytohesin associated scaffolding protein (CASP) in lymphocytes.</title>
        <authorList>
            <person name="MacNeil A.J."/>
            <person name="Mansour M."/>
            <person name="Pohajdak B."/>
        </authorList>
    </citation>
    <scope>SUBCELLULAR LOCATION</scope>
    <scope>TISSUE SPECIFICITY</scope>
    <scope>INTERACTION WITH CYTIP</scope>
</reference>
<reference key="8">
    <citation type="journal article" date="2007" name="Mol. Cell. Proteomics">
        <title>Proteomics identification of sorting nexin 27 as a diacylglycerol kinase zeta-associated protein: new diacylglycerol kinase roles in endocytic recycling.</title>
        <authorList>
            <person name="Rincon E."/>
            <person name="Santos T."/>
            <person name="Avila-Flores A."/>
            <person name="Albar J.P."/>
            <person name="Lalioti V."/>
            <person name="Lei C."/>
            <person name="Hong W."/>
            <person name="Merida I."/>
        </authorList>
    </citation>
    <scope>FUNCTION</scope>
    <scope>SUBCELLULAR LOCATION</scope>
    <scope>TISSUE SPECIFICITY</scope>
    <scope>INTERACTION WITH DGKZ</scope>
</reference>
<reference key="9">
    <citation type="journal article" date="2009" name="FEBS Lett.">
        <title>MCC, a new interacting protein for Scrib, is required for cell migration in epithelial cells.</title>
        <authorList>
            <person name="Arnaud C."/>
            <person name="Sebbagh M."/>
            <person name="Nola S."/>
            <person name="Audebert S."/>
            <person name="Bidaut G."/>
            <person name="Hermant A."/>
            <person name="Gayet O."/>
            <person name="Dusetti N.J."/>
            <person name="Ollendorff V."/>
            <person name="Santoni M.J."/>
            <person name="Borg J.P."/>
            <person name="Lecine P."/>
        </authorList>
    </citation>
    <scope>INTERACTION WITH MCC</scope>
</reference>
<reference key="10">
    <citation type="journal article" date="2010" name="J. Cell Biol.">
        <title>SNX27 mediates PDZ-directed sorting from endosomes to the plasma membrane.</title>
        <authorList>
            <person name="Lauffer B.E."/>
            <person name="Melero C."/>
            <person name="Temkin P."/>
            <person name="Lei C."/>
            <person name="Hong W."/>
            <person name="Kortemme T."/>
            <person name="von Zastrow M."/>
        </authorList>
    </citation>
    <scope>FUNCTION</scope>
    <scope>SUBCELLULAR LOCATION</scope>
    <scope>INTERACTION WITH ADRB2</scope>
    <scope>MUTAGENESIS OF HIS-114</scope>
</reference>
<reference key="11">
    <citation type="journal article" date="2010" name="Sci. Signal.">
        <title>Quantitative phosphoproteomics reveals widespread full phosphorylation site occupancy during mitosis.</title>
        <authorList>
            <person name="Olsen J.V."/>
            <person name="Vermeulen M."/>
            <person name="Santamaria A."/>
            <person name="Kumar C."/>
            <person name="Miller M.L."/>
            <person name="Jensen L.J."/>
            <person name="Gnad F."/>
            <person name="Cox J."/>
            <person name="Jensen T.S."/>
            <person name="Nigg E.A."/>
            <person name="Brunak S."/>
            <person name="Mann M."/>
        </authorList>
    </citation>
    <scope>PHOSPHORYLATION [LARGE SCALE ANALYSIS] AT SER-62</scope>
    <scope>IDENTIFICATION BY MASS SPECTROMETRY [LARGE SCALE ANALYSIS]</scope>
    <source>
        <tissue>Cervix carcinoma</tissue>
    </source>
</reference>
<reference key="12">
    <citation type="journal article" date="2011" name="BMC Syst. Biol.">
        <title>Initial characterization of the human central proteome.</title>
        <authorList>
            <person name="Burkard T.R."/>
            <person name="Planyavsky M."/>
            <person name="Kaupe I."/>
            <person name="Breitwieser F.P."/>
            <person name="Buerckstuemmer T."/>
            <person name="Bennett K.L."/>
            <person name="Superti-Furga G."/>
            <person name="Colinge J."/>
        </authorList>
    </citation>
    <scope>IDENTIFICATION BY MASS SPECTROMETRY [LARGE SCALE ANALYSIS]</scope>
</reference>
<reference key="13">
    <citation type="journal article" date="2011" name="J. Biol. Chem.">
        <title>Sorting nexin 27 protein regulates trafficking of a p21-activated kinase (PAK) interacting exchange factor (beta-Pix)-G protein-coupled receptor kinase interacting protein (GIT) complex via a PDZ domain interaction.</title>
        <authorList>
            <person name="Valdes J.L."/>
            <person name="Tang J."/>
            <person name="McDermott M.I."/>
            <person name="Kuo J.C."/>
            <person name="Zimmerman S.P."/>
            <person name="Wincovitch S.M."/>
            <person name="Waterman C.M."/>
            <person name="Milgram S.L."/>
            <person name="Playford M.P."/>
        </authorList>
    </citation>
    <scope>FUNCTION</scope>
    <scope>INTERACTION WITH ARHGEF7</scope>
</reference>
<reference key="14">
    <citation type="journal article" date="2011" name="J. Cell Sci.">
        <title>Translocation dynamics of sorting nexin 27 in activated T cells.</title>
        <authorList>
            <person name="Rincon E."/>
            <person name="Saez de Guinoa J."/>
            <person name="Gharbi S.I."/>
            <person name="Sorzano C.O."/>
            <person name="Carrasco Y.R."/>
            <person name="Merida I."/>
        </authorList>
    </citation>
    <scope>FUNCTION</scope>
    <scope>SUBCELLULAR LOCATION</scope>
    <scope>PHOSPHATIDYLINOSITOL-3-PHOSPHATE-BINDING</scope>
</reference>
<reference key="15">
    <citation type="journal article" date="2011" name="Mol. Cell. Biol.">
        <title>Deficiency of sorting nexin 27 (SNX27) leads to growth retardation and elevated levels of N-methyl-D-aspartate receptor 2C (NR2C).</title>
        <authorList>
            <person name="Cai L."/>
            <person name="Loo L.S."/>
            <person name="Atlashkin V."/>
            <person name="Hanson B.J."/>
            <person name="Hong W."/>
        </authorList>
    </citation>
    <scope>FUNCTION</scope>
    <scope>SUBCELLULAR LOCATION</scope>
    <scope>PHOSPHATIDYLINOSITOL-3-PHOSPHATE-BINDING</scope>
    <scope>TISSUE SPECIFICITY</scope>
    <scope>INTERACTION WITH GRIN2C</scope>
</reference>
<reference key="16">
    <citation type="journal article" date="2011" name="Nat. Cell Biol.">
        <title>SNX27 mediates retromer tubule entry and endosome-to-plasma membrane trafficking of signalling receptors.</title>
        <authorList>
            <person name="Temkin P."/>
            <person name="Lauffer B."/>
            <person name="Jager S."/>
            <person name="Cimermancic P."/>
            <person name="Krogan N.J."/>
            <person name="von Zastrow M."/>
        </authorList>
    </citation>
    <scope>FUNCTION</scope>
    <scope>INTERACTION WITH ADRB2</scope>
</reference>
<reference key="17">
    <citation type="journal article" date="2012" name="J. Biol. Chem.">
        <title>Sorting nexin 27 interacts with multidrug resistance-associated protein 4 (MRP4) and mediates internalization of MRP4.</title>
        <authorList>
            <person name="Hayashi H."/>
            <person name="Naoi S."/>
            <person name="Nakagawa T."/>
            <person name="Nishikawa T."/>
            <person name="Fukuda H."/>
            <person name="Imajoh-Ohmi S."/>
            <person name="Kondo A."/>
            <person name="Kubo K."/>
            <person name="Yabuki T."/>
            <person name="Hattori A."/>
            <person name="Hirouchi M."/>
            <person name="Sugiyama Y."/>
        </authorList>
    </citation>
    <scope>FUNCTION</scope>
    <scope>SUBCELLULAR LOCATION</scope>
    <scope>INTERACTION WITH ABCC4</scope>
</reference>
<reference key="18">
    <citation type="journal article" date="2013" name="J. Proteome Res.">
        <title>Toward a comprehensive characterization of a human cancer cell phosphoproteome.</title>
        <authorList>
            <person name="Zhou H."/>
            <person name="Di Palma S."/>
            <person name="Preisinger C."/>
            <person name="Peng M."/>
            <person name="Polat A.N."/>
            <person name="Heck A.J."/>
            <person name="Mohammed S."/>
        </authorList>
    </citation>
    <scope>PHOSPHORYLATION [LARGE SCALE ANALYSIS] AT SER-51</scope>
    <scope>IDENTIFICATION BY MASS SPECTROMETRY [LARGE SCALE ANALYSIS]</scope>
    <source>
        <tissue>Cervix carcinoma</tissue>
        <tissue>Erythroleukemia</tissue>
    </source>
</reference>
<reference key="19">
    <citation type="journal article" date="2013" name="Nat. Cell Biol.">
        <title>A global analysis of SNX27-retromer assembly and cargo specificity reveals a function in glucose and metal ion transport.</title>
        <authorList>
            <person name="Steinberg F."/>
            <person name="Gallon M."/>
            <person name="Winfield M."/>
            <person name="Thomas E.C."/>
            <person name="Bell A.J."/>
            <person name="Heesom K.J."/>
            <person name="Tavare J.M."/>
            <person name="Cullen P.J."/>
        </authorList>
    </citation>
    <scope>FUNCTION</scope>
    <scope>INTERACTION WITH SLC2A1; VPS26A AND SNX1</scope>
</reference>
<reference key="20">
    <citation type="journal article" date="2014" name="J. Proteomics">
        <title>An enzyme assisted RP-RPLC approach for in-depth analysis of human liver phosphoproteome.</title>
        <authorList>
            <person name="Bian Y."/>
            <person name="Song C."/>
            <person name="Cheng K."/>
            <person name="Dong M."/>
            <person name="Wang F."/>
            <person name="Huang J."/>
            <person name="Sun D."/>
            <person name="Wang L."/>
            <person name="Ye M."/>
            <person name="Zou H."/>
        </authorList>
    </citation>
    <scope>IDENTIFICATION BY MASS SPECTROMETRY [LARGE SCALE ANALYSIS]</scope>
    <source>
        <tissue>Liver</tissue>
    </source>
</reference>
<reference key="21">
    <citation type="journal article" date="2015" name="Mol. Biol. Cell">
        <title>Sorting nexin 27 regulates basal and stimulated brush border trafficking of NHE3.</title>
        <authorList>
            <person name="Singh V."/>
            <person name="Yang J."/>
            <person name="Cha B."/>
            <person name="Chen T.E."/>
            <person name="Sarker R."/>
            <person name="Yin J."/>
            <person name="Avula L.R."/>
            <person name="Tse M."/>
            <person name="Donowitz M."/>
        </authorList>
    </citation>
    <scope>INTERACTION WITH SLC9A3</scope>
    <scope>SUBCELLULAR LOCATION</scope>
</reference>
<reference key="22">
    <citation type="journal article" date="2015" name="Proteomics">
        <title>N-terminome analysis of the human mitochondrial proteome.</title>
        <authorList>
            <person name="Vaca Jacome A.S."/>
            <person name="Rabilloud T."/>
            <person name="Schaeffer-Reiss C."/>
            <person name="Rompais M."/>
            <person name="Ayoub D."/>
            <person name="Lane L."/>
            <person name="Bairoch A."/>
            <person name="Van Dorsselaer A."/>
            <person name="Carapito C."/>
        </authorList>
    </citation>
    <scope>IDENTIFICATION BY MASS SPECTROMETRY [LARGE SCALE ANALYSIS]</scope>
</reference>
<reference key="23">
    <citation type="submission" date="2013-04" db="PDB data bank">
        <title>Crystal structure of PX domain of human sorting nexin SNX27.</title>
        <authorList>
            <consortium name="Structural genomics consortium (SGC)"/>
        </authorList>
    </citation>
    <scope>X-RAY CRYSTALLOGRAPHY (1.74 ANGSTROMS) OF 156-265</scope>
</reference>
<gene>
    <name type="primary">SNX27</name>
    <name type="synonym">KIAA0488</name>
    <name type="ORF">My014</name>
</gene>
<organism>
    <name type="scientific">Homo sapiens</name>
    <name type="common">Human</name>
    <dbReference type="NCBI Taxonomy" id="9606"/>
    <lineage>
        <taxon>Eukaryota</taxon>
        <taxon>Metazoa</taxon>
        <taxon>Chordata</taxon>
        <taxon>Craniata</taxon>
        <taxon>Vertebrata</taxon>
        <taxon>Euteleostomi</taxon>
        <taxon>Mammalia</taxon>
        <taxon>Eutheria</taxon>
        <taxon>Euarchontoglires</taxon>
        <taxon>Primates</taxon>
        <taxon>Haplorrhini</taxon>
        <taxon>Catarrhini</taxon>
        <taxon>Hominidae</taxon>
        <taxon>Homo</taxon>
    </lineage>
</organism>
<sequence>MADEDGEGIHPSAPHRNGGGGGGGGSGLHCAGNGGGGGGGPRVVRIVKSESGYGFNVRGQVSEGGQLRSINGELYAPLQHVSAVLPGGAADRAGVRKGDRILEVNHVNVEGATHKQVVDLIRAGEKELILTVLSVPPHEADNLDPSDDSLGQSFYDYTEKQAVPISVPRYKHVEQNGEKFVVYNVYMAGRQLCSKRYREFAILHQNLKREFANFTFPRLPGKWPFSLSEQQLDARRRGLEEYLEKVCSIRVIGESDIMQEFLSESDENYNGVSDVELRVALPDGTTVTVRVKKNSTTDQVYQAIAAKVGMDSTTVNYFALFEVISHSFVRKLAPNEFPHKLYIQNYTSAVPGTCLTIRKWLFTTEEEILLNDNDLAVTYFFHQAVDDVKKGYIKAEEKSYQLQKLYEQRKMVMYLNMLRTCEGYNEIIFPHCACDSRRKGHVITAISITHFKLHACTEEGQLENQVIAFEWDEMQRWDTDEEGMAFCFEYARGEKKPRWVKIFTPYFNYMHECFERVFCELKWRKENIFQMARSQQRDVAT</sequence>
<accession>Q96L92</accession>
<accession>Q32Q36</accession>
<accession>Q4AEJ5</accession>
<accession>Q5VWB0</accession>
<accession>Q5VWB1</accession>
<accession>Q5VWB2</accession>
<accession>Q6IPP6</accession>
<accession>Q86UB1</accession>
<accession>Q96D79</accession>
<accession>Q9H3K8</accession>
<keyword id="KW-0002">3D-structure</keyword>
<keyword id="KW-0025">Alternative splicing</keyword>
<keyword id="KW-0963">Cytoplasm</keyword>
<keyword id="KW-0967">Endosome</keyword>
<keyword id="KW-0446">Lipid-binding</keyword>
<keyword id="KW-0472">Membrane</keyword>
<keyword id="KW-0597">Phosphoprotein</keyword>
<keyword id="KW-0653">Protein transport</keyword>
<keyword id="KW-1267">Proteomics identification</keyword>
<keyword id="KW-1185">Reference proteome</keyword>
<keyword id="KW-0813">Transport</keyword>
<comment type="function">
    <text evidence="6 9 10 11 12 13 14 15">Involved in the retrograde transport from endosome to plasma membrane, a trafficking pathway that promotes the recycling of internalized transmembrane proteins. Following internalization, endocytosed transmembrane proteins are delivered to early endosomes and recycled to the plasma membrane instead of being degraded in lysosomes. SNX27 specifically binds and directs sorting of a subset of transmembrane proteins containing a PDZ-binding motif at the C-terminus: following interaction with target transmembrane proteins, associates with the retromer complex, preventing entry into the lysosomal pathway, and promotes retromer-tubule based plasma membrane recycling. SNX27 also binds with the WASH complex. Interacts with membranes containing phosphatidylinositol-3-phosphate (PtdIns(3P)). May participate in establishment of natural killer cell polarity. Recruits CYTIP to early endosomes.</text>
</comment>
<comment type="subunit">
    <text evidence="6 7 8 9 10 12 13 14 15 16">Core component of the SNX27-retromer, a multiprotein complex composed of SNX27, the WASH complex and the retromer complex. Interacts (via PDZ domain) with a number of target transmembrane proteins (via PDZ-binding motif): ABCC4, ADRB2, ARHGEF7, GRIA1, GRIA2, GRIN1, GRIN2A GRIN2C, KCNJ6, KCNJ9 and SLC2A1/GLUT1. Interacts (via the FERM-like regions) with the WASH complex. Interacts with SNX1. Interacts with CYTIP. Isoform 1 and isoform 2 directly interact with DGKZ. Isoform 1 and isoform 2 interact with HT4R isoform 5-HTA(A). Interacts with MCC. Interacts (via PDZ domains) with SLC9A3; directs SLC9A3 membrane insertion from early endosomes to the plasma membrane (PubMed:25851603).</text>
</comment>
<comment type="interaction">
    <interactant intactId="EBI-2514865">
        <id>Q96L92</id>
    </interactant>
    <interactant intactId="EBI-7730807">
        <id>Q9BYF1</id>
        <label>ACE2</label>
    </interactant>
    <organismsDiffer>false</organismsDiffer>
    <experiments>2</experiments>
</comment>
<comment type="interaction">
    <interactant intactId="EBI-2514865">
        <id>Q96L92</id>
    </interactant>
    <interactant intactId="EBI-25474821">
        <id>P0DTC2</id>
        <label>S</label>
    </interactant>
    <organismsDiffer>true</organismsDiffer>
    <experiments>16</experiments>
</comment>
<comment type="subcellular location">
    <subcellularLocation>
        <location evidence="16">Early endosome membrane</location>
        <topology>Peripheral membrane protein</topology>
    </subcellularLocation>
    <subcellularLocation>
        <location>Cytoplasm</location>
        <location>Cytosol</location>
    </subcellularLocation>
    <text>Localizes to immunological synapse in T-cells. In T-cells, recruited from the cytosol to sorting endosomes by phosphoinositide-3-kinase products.</text>
</comment>
<comment type="alternative products">
    <event type="alternative splicing"/>
    <isoform>
        <id>Q96L92-1</id>
        <name>1</name>
        <name>SNX27a</name>
        <sequence type="displayed"/>
    </isoform>
    <isoform>
        <id>Q96L92-3</id>
        <name>2</name>
        <name>SNX27b</name>
        <sequence type="described" ref="VSP_030539"/>
    </isoform>
    <isoform>
        <id>Q96L92-2</id>
        <name>3</name>
        <sequence type="described" ref="VSP_030537 VSP_030538 VSP_030539"/>
    </isoform>
</comment>
<comment type="tissue specificity">
    <text evidence="6 7 10">Widely expressed. Expressed in cells of hematopoietic origin (at protein level).</text>
</comment>
<comment type="domain">
    <text evidence="1 15">The PDZ domain mediates binding to a subset of proteins containing a PDZ-binding motif at the C-terminus: the specificity for PDZ-binding motif is provided by the 2 residues located upstream of the canonical PDZ-binding motif (By similarity). The PDZ domain also mediates binding to the retromer complex via direct interaction with VPS26 (VPS26A or VPS26B) (PubMed:23563491).</text>
</comment>
<comment type="domain">
    <text evidence="9">The PX domain mediates binding to phosphatidylinositol 3-phosphate (PtdIns(3P)) and localization to early endosome membranes.</text>
</comment>
<comment type="miscellaneous">
    <molecule>Isoform 3</molecule>
    <text evidence="21">May be due to intron retention.</text>
</comment>
<comment type="similarity">
    <text evidence="21">Belongs to the sorting nexin family.</text>
</comment>
<comment type="sequence caution" evidence="21">
    <conflict type="erroneous initiation">
        <sequence resource="EMBL-CDS" id="AAG43127"/>
    </conflict>
    <text>Truncated N-terminus.</text>
</comment>
<comment type="sequence caution" evidence="21">
    <conflict type="erroneous initiation">
        <sequence resource="EMBL-CDS" id="AAH12184"/>
    </conflict>
    <text>Truncated N-terminus.</text>
</comment>
<evidence type="ECO:0000250" key="1"/>
<evidence type="ECO:0000255" key="2">
    <source>
        <dbReference type="PROSITE-ProRule" id="PRU00143"/>
    </source>
</evidence>
<evidence type="ECO:0000255" key="3">
    <source>
        <dbReference type="PROSITE-ProRule" id="PRU00147"/>
    </source>
</evidence>
<evidence type="ECO:0000255" key="4">
    <source>
        <dbReference type="PROSITE-ProRule" id="PRU00166"/>
    </source>
</evidence>
<evidence type="ECO:0000256" key="5">
    <source>
        <dbReference type="SAM" id="MobiDB-lite"/>
    </source>
</evidence>
<evidence type="ECO:0000269" key="6">
    <source>
    </source>
</evidence>
<evidence type="ECO:0000269" key="7">
    <source>
    </source>
</evidence>
<evidence type="ECO:0000269" key="8">
    <source>
    </source>
</evidence>
<evidence type="ECO:0000269" key="9">
    <source>
    </source>
</evidence>
<evidence type="ECO:0000269" key="10">
    <source>
    </source>
</evidence>
<evidence type="ECO:0000269" key="11">
    <source>
    </source>
</evidence>
<evidence type="ECO:0000269" key="12">
    <source>
    </source>
</evidence>
<evidence type="ECO:0000269" key="13">
    <source>
    </source>
</evidence>
<evidence type="ECO:0000269" key="14">
    <source>
    </source>
</evidence>
<evidence type="ECO:0000269" key="15">
    <source>
    </source>
</evidence>
<evidence type="ECO:0000269" key="16">
    <source>
    </source>
</evidence>
<evidence type="ECO:0000303" key="17">
    <source>
    </source>
</evidence>
<evidence type="ECO:0000303" key="18">
    <source>
    </source>
</evidence>
<evidence type="ECO:0000303" key="19">
    <source>
    </source>
</evidence>
<evidence type="ECO:0000303" key="20">
    <source ref="5"/>
</evidence>
<evidence type="ECO:0000305" key="21"/>
<evidence type="ECO:0007744" key="22">
    <source>
    </source>
</evidence>
<evidence type="ECO:0007744" key="23">
    <source>
    </source>
</evidence>
<evidence type="ECO:0007829" key="24">
    <source>
        <dbReference type="PDB" id="4HAS"/>
    </source>
</evidence>
<evidence type="ECO:0007829" key="25">
    <source>
        <dbReference type="PDB" id="7CT1"/>
    </source>
</evidence>
<evidence type="ECO:0007829" key="26">
    <source>
        <dbReference type="PDB" id="7E0B"/>
    </source>
</evidence>
<evidence type="ECO:0007829" key="27">
    <source>
        <dbReference type="PDB" id="7PCB"/>
    </source>
</evidence>
<evidence type="ECO:0007829" key="28">
    <source>
        <dbReference type="PDB" id="8TTV"/>
    </source>
</evidence>